<protein>
    <recommendedName>
        <fullName>Superkiller complex protein 8</fullName>
        <shortName>Ski8</shortName>
    </recommendedName>
    <alternativeName>
        <fullName evidence="4">Meiotic recombination REC14 protein homolog</fullName>
    </alternativeName>
    <alternativeName>
        <fullName>WD repeat-containing protein 61</fullName>
    </alternativeName>
    <component>
        <recommendedName>
            <fullName>Superkiller complex protein 8, N-terminally processed</fullName>
        </recommendedName>
        <alternativeName>
            <fullName>WD repeat-containing protein 61, N-terminally processed</fullName>
        </alternativeName>
    </component>
</protein>
<name>SKI8_MOUSE</name>
<organism>
    <name type="scientific">Mus musculus</name>
    <name type="common">Mouse</name>
    <dbReference type="NCBI Taxonomy" id="10090"/>
    <lineage>
        <taxon>Eukaryota</taxon>
        <taxon>Metazoa</taxon>
        <taxon>Chordata</taxon>
        <taxon>Craniata</taxon>
        <taxon>Vertebrata</taxon>
        <taxon>Euteleostomi</taxon>
        <taxon>Mammalia</taxon>
        <taxon>Eutheria</taxon>
        <taxon>Euarchontoglires</taxon>
        <taxon>Glires</taxon>
        <taxon>Rodentia</taxon>
        <taxon>Myomorpha</taxon>
        <taxon>Muroidea</taxon>
        <taxon>Muridae</taxon>
        <taxon>Murinae</taxon>
        <taxon>Mus</taxon>
        <taxon>Mus</taxon>
    </lineage>
</organism>
<accession>Q9ERF3</accession>
<accession>Q3U562</accession>
<accession>Q9CZP1</accession>
<dbReference type="EMBL" id="AF309554">
    <property type="protein sequence ID" value="AAG31640.1"/>
    <property type="molecule type" value="mRNA"/>
</dbReference>
<dbReference type="EMBL" id="AK012342">
    <property type="protein sequence ID" value="BAB28173.1"/>
    <property type="molecule type" value="mRNA"/>
</dbReference>
<dbReference type="EMBL" id="AK013114">
    <property type="protein sequence ID" value="BAB28657.1"/>
    <property type="molecule type" value="mRNA"/>
</dbReference>
<dbReference type="EMBL" id="AK142498">
    <property type="protein sequence ID" value="BAE25087.1"/>
    <property type="molecule type" value="mRNA"/>
</dbReference>
<dbReference type="EMBL" id="AK153862">
    <property type="protein sequence ID" value="BAE32218.1"/>
    <property type="molecule type" value="mRNA"/>
</dbReference>
<dbReference type="EMBL" id="AK167706">
    <property type="protein sequence ID" value="BAE39750.1"/>
    <property type="molecule type" value="mRNA"/>
</dbReference>
<dbReference type="EMBL" id="BC023026">
    <property type="protein sequence ID" value="AAH23026.1"/>
    <property type="molecule type" value="mRNA"/>
</dbReference>
<dbReference type="CCDS" id="CCDS23194.1"/>
<dbReference type="RefSeq" id="NP_001020546.1">
    <property type="nucleotide sequence ID" value="NM_001025375.2"/>
</dbReference>
<dbReference type="RefSeq" id="NP_075680.1">
    <property type="nucleotide sequence ID" value="NM_023191.3"/>
</dbReference>
<dbReference type="RefSeq" id="XP_036011067.1">
    <property type="nucleotide sequence ID" value="XM_036155174.1"/>
</dbReference>
<dbReference type="SMR" id="Q9ERF3"/>
<dbReference type="BioGRID" id="211379">
    <property type="interactions" value="45"/>
</dbReference>
<dbReference type="FunCoup" id="Q9ERF3">
    <property type="interactions" value="550"/>
</dbReference>
<dbReference type="IntAct" id="Q9ERF3">
    <property type="interactions" value="27"/>
</dbReference>
<dbReference type="MINT" id="Q9ERF3"/>
<dbReference type="STRING" id="10090.ENSMUSP00000113560"/>
<dbReference type="iPTMnet" id="Q9ERF3"/>
<dbReference type="PhosphoSitePlus" id="Q9ERF3"/>
<dbReference type="PaxDb" id="10090-ENSMUSP00000113560"/>
<dbReference type="ProteomicsDB" id="275206"/>
<dbReference type="Pumba" id="Q9ERF3"/>
<dbReference type="Antibodypedia" id="27601">
    <property type="antibodies" value="310 antibodies from 29 providers"/>
</dbReference>
<dbReference type="DNASU" id="66317"/>
<dbReference type="Ensembl" id="ENSMUST00000051822.13">
    <property type="protein sequence ID" value="ENSMUSP00000056359.7"/>
    <property type="gene ID" value="ENSMUSG00000061559.16"/>
</dbReference>
<dbReference type="Ensembl" id="ENSMUST00000121204.8">
    <property type="protein sequence ID" value="ENSMUSP00000113560.2"/>
    <property type="gene ID" value="ENSMUSG00000061559.16"/>
</dbReference>
<dbReference type="GeneID" id="66317"/>
<dbReference type="KEGG" id="mmu:66317"/>
<dbReference type="UCSC" id="uc009prm.2">
    <property type="organism name" value="mouse"/>
</dbReference>
<dbReference type="AGR" id="MGI:1917493"/>
<dbReference type="CTD" id="80349"/>
<dbReference type="MGI" id="MGI:1917493">
    <property type="gene designation" value="Skic8"/>
</dbReference>
<dbReference type="VEuPathDB" id="HostDB:ENSMUSG00000061559"/>
<dbReference type="eggNOG" id="KOG4155">
    <property type="taxonomic scope" value="Eukaryota"/>
</dbReference>
<dbReference type="GeneTree" id="ENSGT00940000153533"/>
<dbReference type="InParanoid" id="Q9ERF3"/>
<dbReference type="OMA" id="LDSSMCL"/>
<dbReference type="OrthoDB" id="17410at2759"/>
<dbReference type="PhylomeDB" id="Q9ERF3"/>
<dbReference type="TreeFam" id="TF324549"/>
<dbReference type="Reactome" id="R-MMU-112382">
    <property type="pathway name" value="Formation of RNA Pol II elongation complex"/>
</dbReference>
<dbReference type="Reactome" id="R-MMU-429958">
    <property type="pathway name" value="mRNA decay by 3' to 5' exoribonuclease"/>
</dbReference>
<dbReference type="Reactome" id="R-MMU-674695">
    <property type="pathway name" value="RNA Polymerase II Pre-transcription Events"/>
</dbReference>
<dbReference type="Reactome" id="R-MMU-75955">
    <property type="pathway name" value="RNA Polymerase II Transcription Elongation"/>
</dbReference>
<dbReference type="Reactome" id="R-MMU-8866654">
    <property type="pathway name" value="E3 ubiquitin ligases ubiquitinate target proteins"/>
</dbReference>
<dbReference type="BioGRID-ORCS" id="66317">
    <property type="hits" value="33 hits in 78 CRISPR screens"/>
</dbReference>
<dbReference type="ChiTaRS" id="Wdr61">
    <property type="organism name" value="mouse"/>
</dbReference>
<dbReference type="PRO" id="PR:Q9ERF3"/>
<dbReference type="Proteomes" id="UP000000589">
    <property type="component" value="Chromosome 9"/>
</dbReference>
<dbReference type="RNAct" id="Q9ERF3">
    <property type="molecule type" value="protein"/>
</dbReference>
<dbReference type="Bgee" id="ENSMUSG00000061559">
    <property type="expression patterns" value="Expressed in metanephric ureteric bud and 263 other cell types or tissues"/>
</dbReference>
<dbReference type="ExpressionAtlas" id="Q9ERF3">
    <property type="expression patterns" value="baseline and differential"/>
</dbReference>
<dbReference type="GO" id="GO:0016593">
    <property type="term" value="C:Cdc73/Paf1 complex"/>
    <property type="evidence" value="ECO:0000353"/>
    <property type="project" value="UniProtKB"/>
</dbReference>
<dbReference type="GO" id="GO:0005737">
    <property type="term" value="C:cytoplasm"/>
    <property type="evidence" value="ECO:0000250"/>
    <property type="project" value="UniProtKB"/>
</dbReference>
<dbReference type="GO" id="GO:0005829">
    <property type="term" value="C:cytosol"/>
    <property type="evidence" value="ECO:0007669"/>
    <property type="project" value="Ensembl"/>
</dbReference>
<dbReference type="GO" id="GO:0000791">
    <property type="term" value="C:euchromatin"/>
    <property type="evidence" value="ECO:0000250"/>
    <property type="project" value="UniProtKB"/>
</dbReference>
<dbReference type="GO" id="GO:0005634">
    <property type="term" value="C:nucleus"/>
    <property type="evidence" value="ECO:0000250"/>
    <property type="project" value="UniProtKB"/>
</dbReference>
<dbReference type="GO" id="GO:0055087">
    <property type="term" value="C:Ski complex"/>
    <property type="evidence" value="ECO:0000250"/>
    <property type="project" value="UniProtKB"/>
</dbReference>
<dbReference type="GO" id="GO:0045638">
    <property type="term" value="P:negative regulation of myeloid cell differentiation"/>
    <property type="evidence" value="ECO:0000250"/>
    <property type="project" value="UniProtKB"/>
</dbReference>
<dbReference type="GO" id="GO:0070478">
    <property type="term" value="P:nuclear-transcribed mRNA catabolic process, 3'-5' exonucleolytic nonsense-mediated decay"/>
    <property type="evidence" value="ECO:0000250"/>
    <property type="project" value="UniProtKB"/>
</dbReference>
<dbReference type="GO" id="GO:0072344">
    <property type="term" value="P:rescue of stalled ribosome"/>
    <property type="evidence" value="ECO:0000250"/>
    <property type="project" value="UniProtKB"/>
</dbReference>
<dbReference type="GO" id="GO:0006368">
    <property type="term" value="P:transcription elongation by RNA polymerase II"/>
    <property type="evidence" value="ECO:0000250"/>
    <property type="project" value="UniProtKB"/>
</dbReference>
<dbReference type="GO" id="GO:0016055">
    <property type="term" value="P:Wnt signaling pathway"/>
    <property type="evidence" value="ECO:0007669"/>
    <property type="project" value="UniProtKB-KW"/>
</dbReference>
<dbReference type="CDD" id="cd00200">
    <property type="entry name" value="WD40"/>
    <property type="match status" value="1"/>
</dbReference>
<dbReference type="FunFam" id="2.130.10.10:FF:000094">
    <property type="entry name" value="WD repeat-containing protein 61"/>
    <property type="match status" value="1"/>
</dbReference>
<dbReference type="Gene3D" id="2.130.10.10">
    <property type="entry name" value="YVTN repeat-like/Quinoprotein amine dehydrogenase"/>
    <property type="match status" value="1"/>
</dbReference>
<dbReference type="InterPro" id="IPR020472">
    <property type="entry name" value="G-protein_beta_WD-40_rep"/>
</dbReference>
<dbReference type="InterPro" id="IPR051510">
    <property type="entry name" value="SKI8"/>
</dbReference>
<dbReference type="InterPro" id="IPR015943">
    <property type="entry name" value="WD40/YVTN_repeat-like_dom_sf"/>
</dbReference>
<dbReference type="InterPro" id="IPR019775">
    <property type="entry name" value="WD40_repeat_CS"/>
</dbReference>
<dbReference type="InterPro" id="IPR036322">
    <property type="entry name" value="WD40_repeat_dom_sf"/>
</dbReference>
<dbReference type="InterPro" id="IPR001680">
    <property type="entry name" value="WD40_rpt"/>
</dbReference>
<dbReference type="PANTHER" id="PTHR44090:SF1">
    <property type="entry name" value="SUPERKILLER COMPLEX PROTEIN 8"/>
    <property type="match status" value="1"/>
</dbReference>
<dbReference type="PANTHER" id="PTHR44090">
    <property type="entry name" value="WD REPEAT-CONTAINING PROTEIN 61"/>
    <property type="match status" value="1"/>
</dbReference>
<dbReference type="Pfam" id="PF00400">
    <property type="entry name" value="WD40"/>
    <property type="match status" value="7"/>
</dbReference>
<dbReference type="PRINTS" id="PR00320">
    <property type="entry name" value="GPROTEINBRPT"/>
</dbReference>
<dbReference type="SMART" id="SM00320">
    <property type="entry name" value="WD40"/>
    <property type="match status" value="7"/>
</dbReference>
<dbReference type="SUPFAM" id="SSF50978">
    <property type="entry name" value="WD40 repeat-like"/>
    <property type="match status" value="1"/>
</dbReference>
<dbReference type="PROSITE" id="PS00678">
    <property type="entry name" value="WD_REPEATS_1"/>
    <property type="match status" value="1"/>
</dbReference>
<dbReference type="PROSITE" id="PS50082">
    <property type="entry name" value="WD_REPEATS_2"/>
    <property type="match status" value="6"/>
</dbReference>
<dbReference type="PROSITE" id="PS50294">
    <property type="entry name" value="WD_REPEATS_REGION"/>
    <property type="match status" value="1"/>
</dbReference>
<feature type="chain" id="PRO_0000425749" description="Superkiller complex protein 8">
    <location>
        <begin position="1"/>
        <end position="305"/>
    </location>
</feature>
<feature type="initiator methionine" description="Removed; alternate" evidence="1">
    <location>
        <position position="1"/>
    </location>
</feature>
<feature type="chain" id="PRO_0000245852" description="Superkiller complex protein 8, N-terminally processed">
    <location>
        <begin position="2"/>
        <end position="305"/>
    </location>
</feature>
<feature type="repeat" description="WD 1">
    <location>
        <begin position="14"/>
        <end position="57"/>
    </location>
</feature>
<feature type="repeat" description="WD 2">
    <location>
        <begin position="62"/>
        <end position="101"/>
    </location>
</feature>
<feature type="repeat" description="WD 3">
    <location>
        <begin position="104"/>
        <end position="143"/>
    </location>
</feature>
<feature type="repeat" description="WD 4">
    <location>
        <begin position="146"/>
        <end position="187"/>
    </location>
</feature>
<feature type="repeat" description="WD 5">
    <location>
        <begin position="188"/>
        <end position="227"/>
    </location>
</feature>
<feature type="repeat" description="WD 6">
    <location>
        <begin position="230"/>
        <end position="269"/>
    </location>
</feature>
<feature type="repeat" description="WD 7">
    <location>
        <begin position="272"/>
        <end position="305"/>
    </location>
</feature>
<feature type="modified residue" description="N-acetylmethionine" evidence="1">
    <location>
        <position position="1"/>
    </location>
</feature>
<feature type="modified residue" description="N-acetylthreonine; in WD repeat-containing protein 61, N-terminally processed" evidence="1">
    <location>
        <position position="2"/>
    </location>
</feature>
<feature type="sequence conflict" description="In Ref. 2; BAE32218." evidence="5" ref="2">
    <original>S</original>
    <variation>G</variation>
    <location>
        <position position="229"/>
    </location>
</feature>
<feature type="sequence conflict" description="In Ref. 2; BAB28173." evidence="5" ref="2">
    <original>S</original>
    <variation>L</variation>
    <location>
        <position position="251"/>
    </location>
</feature>
<sequence>MTNQYSILFKQEQAHDDAIWSVAWETNKKENIETVVTGSLDDLVKVWKWRDERLELQWSLEGHQLGVVSVDISHTLPIAASSSLDAHIRLWDLENGKQMKSIDAGPVDAWTLAFSPDSQYLATGTHMGKVNIFGVESGKKEYSLDTRGKFILSIAYSPDGKYLASGAIDGIINIFDIATGKLLHTLEGHAMPIRSLTFSPDSQLLVTASDDGYIKIYDVQHANLAGTLSGHASWVLNVAFCPDDTHFVSSSSDKSVKVWDVGTRTCIHTFFDHQDQVWGVKYNGNGSKIVSVGDDQEIHVYDCPI</sequence>
<reference key="1">
    <citation type="submission" date="2000-09" db="EMBL/GenBank/DDBJ databases">
        <title>Mammalian homologs of meiotic recombination proteins SpRec14 and ScRec103.</title>
        <authorList>
            <person name="Shannon M."/>
            <person name="Thelen M.P."/>
        </authorList>
    </citation>
    <scope>NUCLEOTIDE SEQUENCE [MRNA]</scope>
    <source>
        <strain>BALB/cJ</strain>
    </source>
</reference>
<reference key="2">
    <citation type="journal article" date="2005" name="Science">
        <title>The transcriptional landscape of the mammalian genome.</title>
        <authorList>
            <person name="Carninci P."/>
            <person name="Kasukawa T."/>
            <person name="Katayama S."/>
            <person name="Gough J."/>
            <person name="Frith M.C."/>
            <person name="Maeda N."/>
            <person name="Oyama R."/>
            <person name="Ravasi T."/>
            <person name="Lenhard B."/>
            <person name="Wells C."/>
            <person name="Kodzius R."/>
            <person name="Shimokawa K."/>
            <person name="Bajic V.B."/>
            <person name="Brenner S.E."/>
            <person name="Batalov S."/>
            <person name="Forrest A.R."/>
            <person name="Zavolan M."/>
            <person name="Davis M.J."/>
            <person name="Wilming L.G."/>
            <person name="Aidinis V."/>
            <person name="Allen J.E."/>
            <person name="Ambesi-Impiombato A."/>
            <person name="Apweiler R."/>
            <person name="Aturaliya R.N."/>
            <person name="Bailey T.L."/>
            <person name="Bansal M."/>
            <person name="Baxter L."/>
            <person name="Beisel K.W."/>
            <person name="Bersano T."/>
            <person name="Bono H."/>
            <person name="Chalk A.M."/>
            <person name="Chiu K.P."/>
            <person name="Choudhary V."/>
            <person name="Christoffels A."/>
            <person name="Clutterbuck D.R."/>
            <person name="Crowe M.L."/>
            <person name="Dalla E."/>
            <person name="Dalrymple B.P."/>
            <person name="de Bono B."/>
            <person name="Della Gatta G."/>
            <person name="di Bernardo D."/>
            <person name="Down T."/>
            <person name="Engstrom P."/>
            <person name="Fagiolini M."/>
            <person name="Faulkner G."/>
            <person name="Fletcher C.F."/>
            <person name="Fukushima T."/>
            <person name="Furuno M."/>
            <person name="Futaki S."/>
            <person name="Gariboldi M."/>
            <person name="Georgii-Hemming P."/>
            <person name="Gingeras T.R."/>
            <person name="Gojobori T."/>
            <person name="Green R.E."/>
            <person name="Gustincich S."/>
            <person name="Harbers M."/>
            <person name="Hayashi Y."/>
            <person name="Hensch T.K."/>
            <person name="Hirokawa N."/>
            <person name="Hill D."/>
            <person name="Huminiecki L."/>
            <person name="Iacono M."/>
            <person name="Ikeo K."/>
            <person name="Iwama A."/>
            <person name="Ishikawa T."/>
            <person name="Jakt M."/>
            <person name="Kanapin A."/>
            <person name="Katoh M."/>
            <person name="Kawasawa Y."/>
            <person name="Kelso J."/>
            <person name="Kitamura H."/>
            <person name="Kitano H."/>
            <person name="Kollias G."/>
            <person name="Krishnan S.P."/>
            <person name="Kruger A."/>
            <person name="Kummerfeld S.K."/>
            <person name="Kurochkin I.V."/>
            <person name="Lareau L.F."/>
            <person name="Lazarevic D."/>
            <person name="Lipovich L."/>
            <person name="Liu J."/>
            <person name="Liuni S."/>
            <person name="McWilliam S."/>
            <person name="Madan Babu M."/>
            <person name="Madera M."/>
            <person name="Marchionni L."/>
            <person name="Matsuda H."/>
            <person name="Matsuzawa S."/>
            <person name="Miki H."/>
            <person name="Mignone F."/>
            <person name="Miyake S."/>
            <person name="Morris K."/>
            <person name="Mottagui-Tabar S."/>
            <person name="Mulder N."/>
            <person name="Nakano N."/>
            <person name="Nakauchi H."/>
            <person name="Ng P."/>
            <person name="Nilsson R."/>
            <person name="Nishiguchi S."/>
            <person name="Nishikawa S."/>
            <person name="Nori F."/>
            <person name="Ohara O."/>
            <person name="Okazaki Y."/>
            <person name="Orlando V."/>
            <person name="Pang K.C."/>
            <person name="Pavan W.J."/>
            <person name="Pavesi G."/>
            <person name="Pesole G."/>
            <person name="Petrovsky N."/>
            <person name="Piazza S."/>
            <person name="Reed J."/>
            <person name="Reid J.F."/>
            <person name="Ring B.Z."/>
            <person name="Ringwald M."/>
            <person name="Rost B."/>
            <person name="Ruan Y."/>
            <person name="Salzberg S.L."/>
            <person name="Sandelin A."/>
            <person name="Schneider C."/>
            <person name="Schoenbach C."/>
            <person name="Sekiguchi K."/>
            <person name="Semple C.A."/>
            <person name="Seno S."/>
            <person name="Sessa L."/>
            <person name="Sheng Y."/>
            <person name="Shibata Y."/>
            <person name="Shimada H."/>
            <person name="Shimada K."/>
            <person name="Silva D."/>
            <person name="Sinclair B."/>
            <person name="Sperling S."/>
            <person name="Stupka E."/>
            <person name="Sugiura K."/>
            <person name="Sultana R."/>
            <person name="Takenaka Y."/>
            <person name="Taki K."/>
            <person name="Tammoja K."/>
            <person name="Tan S.L."/>
            <person name="Tang S."/>
            <person name="Taylor M.S."/>
            <person name="Tegner J."/>
            <person name="Teichmann S.A."/>
            <person name="Ueda H.R."/>
            <person name="van Nimwegen E."/>
            <person name="Verardo R."/>
            <person name="Wei C.L."/>
            <person name="Yagi K."/>
            <person name="Yamanishi H."/>
            <person name="Zabarovsky E."/>
            <person name="Zhu S."/>
            <person name="Zimmer A."/>
            <person name="Hide W."/>
            <person name="Bult C."/>
            <person name="Grimmond S.M."/>
            <person name="Teasdale R.D."/>
            <person name="Liu E.T."/>
            <person name="Brusic V."/>
            <person name="Quackenbush J."/>
            <person name="Wahlestedt C."/>
            <person name="Mattick J.S."/>
            <person name="Hume D.A."/>
            <person name="Kai C."/>
            <person name="Sasaki D."/>
            <person name="Tomaru Y."/>
            <person name="Fukuda S."/>
            <person name="Kanamori-Katayama M."/>
            <person name="Suzuki M."/>
            <person name="Aoki J."/>
            <person name="Arakawa T."/>
            <person name="Iida J."/>
            <person name="Imamura K."/>
            <person name="Itoh M."/>
            <person name="Kato T."/>
            <person name="Kawaji H."/>
            <person name="Kawagashira N."/>
            <person name="Kawashima T."/>
            <person name="Kojima M."/>
            <person name="Kondo S."/>
            <person name="Konno H."/>
            <person name="Nakano K."/>
            <person name="Ninomiya N."/>
            <person name="Nishio T."/>
            <person name="Okada M."/>
            <person name="Plessy C."/>
            <person name="Shibata K."/>
            <person name="Shiraki T."/>
            <person name="Suzuki S."/>
            <person name="Tagami M."/>
            <person name="Waki K."/>
            <person name="Watahiki A."/>
            <person name="Okamura-Oho Y."/>
            <person name="Suzuki H."/>
            <person name="Kawai J."/>
            <person name="Hayashizaki Y."/>
        </authorList>
    </citation>
    <scope>NUCLEOTIDE SEQUENCE [LARGE SCALE MRNA]</scope>
    <source>
        <strain>C57BL/6J</strain>
        <tissue>Embryo</tissue>
        <tissue>Placenta</tissue>
        <tissue>Stomach</tissue>
    </source>
</reference>
<reference key="3">
    <citation type="journal article" date="2004" name="Genome Res.">
        <title>The status, quality, and expansion of the NIH full-length cDNA project: the Mammalian Gene Collection (MGC).</title>
        <authorList>
            <consortium name="The MGC Project Team"/>
        </authorList>
    </citation>
    <scope>NUCLEOTIDE SEQUENCE [LARGE SCALE MRNA]</scope>
    <source>
        <strain>FVB/N-3</strain>
        <tissue>Mammary tumor</tissue>
    </source>
</reference>
<reference key="4">
    <citation type="journal article" date="2009" name="Cell Stem Cell">
        <title>A genome-scale RNAi screen for Oct4 modulators defines a role of the Paf1 complex for embryonic stem cell identity.</title>
        <authorList>
            <person name="Ding L."/>
            <person name="Paszkowski-Rogacz M."/>
            <person name="Nitzsche A."/>
            <person name="Slabicki M.M."/>
            <person name="Heninger A.K."/>
            <person name="de Vries I."/>
            <person name="Kittler R."/>
            <person name="Junqueira M."/>
            <person name="Shevchenko A."/>
            <person name="Schulz H."/>
            <person name="Hubner N."/>
            <person name="Doss M.X."/>
            <person name="Sachinidis A."/>
            <person name="Hescheler J."/>
            <person name="Iacone R."/>
            <person name="Anastassiadis K."/>
            <person name="Stewart A.F."/>
            <person name="Pisabarro M.T."/>
            <person name="Caldarelli A."/>
            <person name="Poser I."/>
            <person name="Theis M."/>
            <person name="Buchholz F."/>
        </authorList>
    </citation>
    <scope>FUNCTION</scope>
</reference>
<reference key="5">
    <citation type="journal article" date="2010" name="Cell">
        <title>A tissue-specific atlas of mouse protein phosphorylation and expression.</title>
        <authorList>
            <person name="Huttlin E.L."/>
            <person name="Jedrychowski M.P."/>
            <person name="Elias J.E."/>
            <person name="Goswami T."/>
            <person name="Rad R."/>
            <person name="Beausoleil S.A."/>
            <person name="Villen J."/>
            <person name="Haas W."/>
            <person name="Sowa M.E."/>
            <person name="Gygi S.P."/>
        </authorList>
    </citation>
    <scope>IDENTIFICATION BY MASS SPECTROMETRY [LARGE SCALE ANALYSIS]</scope>
    <source>
        <tissue>Brain</tissue>
        <tissue>Brown adipose tissue</tissue>
        <tissue>Heart</tissue>
        <tissue>Kidney</tissue>
        <tissue>Liver</tissue>
        <tissue>Lung</tissue>
        <tissue>Pancreas</tissue>
        <tissue>Spleen</tissue>
        <tissue>Testis</tissue>
    </source>
</reference>
<reference key="6">
    <citation type="journal article" date="2016" name="Nat. Cell Biol.">
        <title>Regulation of transcriptional elongation in pluripotency and cell differentiation by the PHD-finger protein Phf5a.</title>
        <authorList>
            <person name="Strikoudis A."/>
            <person name="Lazaris C."/>
            <person name="Trimarchi T."/>
            <person name="Galvao Neto A.L."/>
            <person name="Yang Y."/>
            <person name="Ntziachristos P."/>
            <person name="Rothbart S."/>
            <person name="Buckley S."/>
            <person name="Dolgalev I."/>
            <person name="Stadtfeld M."/>
            <person name="Strahl B.D."/>
            <person name="Dynlacht B.D."/>
            <person name="Tsirigos A."/>
            <person name="Aifantis I."/>
        </authorList>
    </citation>
    <scope>IDENTIFICATION BY MASS SPECTROMETRY</scope>
    <scope>INTERACTION WITH PHF5A</scope>
    <scope>SUBUNIT</scope>
</reference>
<proteinExistence type="evidence at protein level"/>
<keyword id="KW-0007">Acetylation</keyword>
<keyword id="KW-0963">Cytoplasm</keyword>
<keyword id="KW-0539">Nucleus</keyword>
<keyword id="KW-1185">Reference proteome</keyword>
<keyword id="KW-0677">Repeat</keyword>
<keyword id="KW-0804">Transcription</keyword>
<keyword id="KW-0805">Transcription regulation</keyword>
<keyword id="KW-0853">WD repeat</keyword>
<keyword id="KW-0879">Wnt signaling pathway</keyword>
<comment type="function">
    <text evidence="1 2">Component of the PAF1 complex (PAF1C) which has multiple functions during transcription by RNA polymerase II and is implicated in regulation of development and maintenance of embryonic stem cell pluripotency (PubMed:19345177). PAF1C associates with RNA polymerase II through interaction with POLR2A CTD non-phosphorylated and 'Ser-2'- and 'Ser-5'-phosphorylated forms and is involved in transcriptional elongation, acting both independently and synergistically with TCEA1 and in cooperation with the DSIF complex and HTATSF1 (By similarity). PAF1C is required for transcription of Hox and Wnt target genes (By similarity). PAF1C is involved in hematopoiesis and stimulates transcriptional activity of KMT2A/MLL1; it promotes leukemogenesis through association with KMT2A/MLL1-rearranged oncoproteins, such as KMT2A/MLL1-MLLT3/AF9 and KMT2A/MLL1-MLLT1/ENL (By similarity). PAF1C is involved in histone modifications such as ubiquitination of histone H2B and methylation on histone H3 'Lys-4' (H3K4me3) (By similarity). PAF1C recruits the RNF20/40 E3 ubiquitin-protein ligase complex and the E2 enzyme UBE2A or UBE2B to chromatin which mediate monoubiquitination of 'Lys-120' of histone H2B (H2BK120ub1); UB2A/B-mediated H2B ubiquitination is proposed to be coupled to transcription (By similarity). PAF1C is involved in mRNA 3' end formation probably through association with cleavage and poly(A) factors (By similarity). In case of infection by influenza A strain H3N2, PAF1C associates with viral NS1 protein, thereby regulating gene transcription (By similarity). Required for mono- and trimethylation on histone H3 'Lys-4' (H3K4me3), dimethylation on histone H3 'Lys-79' (H3K4me3) (By similarity). Required for Hox gene transcription (By similarity). Also acts as a component of the SKI complex, a multiprotein complex that assists the RNA-degrading exosome during the mRNA decay and quality-control pathways (By similarity). The SKI complex catalyzes mRNA extraction from 80S ribosomal complexes in the 3'-5' direction and channels mRNA to the cytosolic exosome for degradation (By similarity). SKI-mediated extraction of mRNA from stalled ribosomes allow binding of the Pelota-HBS1L complex and subsequent ribosome disassembly by ABCE1 for ribosome recycling (By similarity).</text>
</comment>
<comment type="subunit">
    <text evidence="1 3">Component of the PAF1 complex, which consists of CDC73, PAF1, LEO1, CTR9, RTF1 and SKIC8. The PAF1 complex interacts with PHF5A (PubMed:27749823). Within the PAF1 complex interacts directly with PHF5A (PubMed:27749823). Component of the SKI complex which consists of SKIC2, SKIC3 and SKIC8 (By similarity).</text>
</comment>
<comment type="subcellular location">
    <subcellularLocation>
        <location evidence="1">Nucleus</location>
    </subcellularLocation>
    <subcellularLocation>
        <location evidence="1">Cytoplasm</location>
    </subcellularLocation>
</comment>
<comment type="similarity">
    <text evidence="5">Belongs to the SKI8 family.</text>
</comment>
<evidence type="ECO:0000250" key="1">
    <source>
        <dbReference type="UniProtKB" id="Q9GZS3"/>
    </source>
</evidence>
<evidence type="ECO:0000269" key="2">
    <source>
    </source>
</evidence>
<evidence type="ECO:0000269" key="3">
    <source>
    </source>
</evidence>
<evidence type="ECO:0000303" key="4">
    <source ref="1"/>
</evidence>
<evidence type="ECO:0000305" key="5"/>
<gene>
    <name type="primary">Skic8</name>
    <name type="synonym">Wdr61</name>
</gene>